<proteinExistence type="evidence at protein level"/>
<name>PHPT_MYTSE</name>
<comment type="function">
    <text evidence="1">Hormone that controls sex pheromone production in larvae.</text>
</comment>
<comment type="subcellular location">
    <subcellularLocation>
        <location>Secreted</location>
    </subcellularLocation>
</comment>
<comment type="similarity">
    <text evidence="2">Belongs to the pyrokinin family.</text>
</comment>
<organism>
    <name type="scientific">Mythimna separata</name>
    <name type="common">Oriental armyworm</name>
    <name type="synonym">Pseudaletia separata</name>
    <dbReference type="NCBI Taxonomy" id="271217"/>
    <lineage>
        <taxon>Eukaryota</taxon>
        <taxon>Metazoa</taxon>
        <taxon>Ecdysozoa</taxon>
        <taxon>Arthropoda</taxon>
        <taxon>Hexapoda</taxon>
        <taxon>Insecta</taxon>
        <taxon>Pterygota</taxon>
        <taxon>Neoptera</taxon>
        <taxon>Endopterygota</taxon>
        <taxon>Lepidoptera</taxon>
        <taxon>Glossata</taxon>
        <taxon>Ditrysia</taxon>
        <taxon>Noctuoidea</taxon>
        <taxon>Noctuidae</taxon>
        <taxon>Hadeninae</taxon>
        <taxon>Mythimna</taxon>
    </lineage>
</organism>
<dbReference type="PIR" id="JS0647">
    <property type="entry name" value="JS0647"/>
</dbReference>
<dbReference type="GO" id="GO:0005576">
    <property type="term" value="C:extracellular region"/>
    <property type="evidence" value="ECO:0007669"/>
    <property type="project" value="UniProtKB-SubCell"/>
</dbReference>
<dbReference type="GO" id="GO:0005184">
    <property type="term" value="F:neuropeptide hormone activity"/>
    <property type="evidence" value="ECO:0007669"/>
    <property type="project" value="InterPro"/>
</dbReference>
<dbReference type="GO" id="GO:0007218">
    <property type="term" value="P:neuropeptide signaling pathway"/>
    <property type="evidence" value="ECO:0007669"/>
    <property type="project" value="UniProtKB-KW"/>
</dbReference>
<dbReference type="InterPro" id="IPR001484">
    <property type="entry name" value="Pyrokinin_CS"/>
</dbReference>
<dbReference type="PROSITE" id="PS00539">
    <property type="entry name" value="PYROKININ"/>
    <property type="match status" value="1"/>
</dbReference>
<evidence type="ECO:0000269" key="1">
    <source>
    </source>
</evidence>
<evidence type="ECO:0000305" key="2"/>
<keyword id="KW-0027">Amidation</keyword>
<keyword id="KW-0903">Direct protein sequencing</keyword>
<keyword id="KW-0372">Hormone</keyword>
<keyword id="KW-0527">Neuropeptide</keyword>
<keyword id="KW-0964">Secreted</keyword>
<sequence length="18" mass="2200">KLSYDDKVFENVEFTPRL</sequence>
<protein>
    <recommendedName>
        <fullName>Pheromonotropin</fullName>
        <shortName>Pss-PT</shortName>
    </recommendedName>
</protein>
<accession>P25271</accession>
<feature type="peptide" id="PRO_0000044320" description="Pheromonotropin">
    <location>
        <begin position="1"/>
        <end position="18"/>
    </location>
</feature>
<feature type="modified residue" description="Leucine amide" evidence="1">
    <location>
        <position position="18"/>
    </location>
</feature>
<reference key="1">
    <citation type="journal article" date="1992" name="Biochem. Biophys. Res. Commun.">
        <title>Isolation and primary structure of a novel pheromonotropic neuropeptide structurally related to leucopyrokinin from the armyworm larvae, Pseudaletia separata.</title>
        <authorList>
            <person name="Matsumoto S."/>
            <person name="Fonagy A."/>
            <person name="Kurihara M."/>
            <person name="Uchiumi K."/>
            <person name="Nagamine T."/>
            <person name="Chijimatsu M."/>
            <person name="Mitsui T."/>
        </authorList>
    </citation>
    <scope>PROTEIN SEQUENCE</scope>
    <scope>AMIDATION AT LEU-18</scope>
    <scope>FUNCTION</scope>
    <source>
        <tissue>Head</tissue>
    </source>
</reference>